<dbReference type="EMBL" id="AM231680">
    <property type="protein sequence ID" value="CAJ77818.1"/>
    <property type="molecule type" value="Genomic_DNA"/>
</dbReference>
<dbReference type="SMR" id="A1IVR7"/>
<dbReference type="GO" id="GO:0005576">
    <property type="term" value="C:extracellular region"/>
    <property type="evidence" value="ECO:0007669"/>
    <property type="project" value="UniProtKB-SubCell"/>
</dbReference>
<dbReference type="GO" id="GO:0030550">
    <property type="term" value="F:acetylcholine receptor inhibitor activity"/>
    <property type="evidence" value="ECO:0007669"/>
    <property type="project" value="UniProtKB-KW"/>
</dbReference>
<dbReference type="GO" id="GO:0099106">
    <property type="term" value="F:ion channel regulator activity"/>
    <property type="evidence" value="ECO:0007669"/>
    <property type="project" value="UniProtKB-KW"/>
</dbReference>
<dbReference type="GO" id="GO:0090729">
    <property type="term" value="F:toxin activity"/>
    <property type="evidence" value="ECO:0007669"/>
    <property type="project" value="UniProtKB-KW"/>
</dbReference>
<dbReference type="CDD" id="cd00206">
    <property type="entry name" value="TFP_snake_toxin"/>
    <property type="match status" value="1"/>
</dbReference>
<dbReference type="Gene3D" id="2.10.60.10">
    <property type="entry name" value="CD59"/>
    <property type="match status" value="1"/>
</dbReference>
<dbReference type="InterPro" id="IPR003571">
    <property type="entry name" value="Snake_3FTx"/>
</dbReference>
<dbReference type="InterPro" id="IPR045860">
    <property type="entry name" value="Snake_toxin-like_sf"/>
</dbReference>
<dbReference type="InterPro" id="IPR018354">
    <property type="entry name" value="Snake_toxin_con_site"/>
</dbReference>
<dbReference type="InterPro" id="IPR054131">
    <property type="entry name" value="Toxin_cobra-type"/>
</dbReference>
<dbReference type="Pfam" id="PF21947">
    <property type="entry name" value="Toxin_cobra-type"/>
    <property type="match status" value="1"/>
</dbReference>
<dbReference type="SUPFAM" id="SSF57302">
    <property type="entry name" value="Snake toxin-like"/>
    <property type="match status" value="1"/>
</dbReference>
<dbReference type="PROSITE" id="PS00272">
    <property type="entry name" value="SNAKE_TOXIN"/>
    <property type="match status" value="1"/>
</dbReference>
<comment type="function">
    <text evidence="1">Binds to muscular and neuronal nicotinic acetylcholine receptor (nAChR) and inhibits acetylcholine from binding to the receptor, thereby impairing neuromuscular and neuronal transmission (By similarity). Blocks muscle type nAChR (By similarity). Also binds with high affinity to alpha-7/CHRNA7 nAChRs (By similarity). In addition, shows a weak inhibition of neuronal alpha-3-beta-2/CHRNA3-CHRNB2 nAChR (By similarity). Selectively binds to alpha-1-delta subunit interface of the mouse muscle nicotinic acetylcholine receptor, with a 10-fold higher affinity for the adult than for the fetal receptors (By similarity). In vivo, when intraperitoneally injected into mice, causes flaccid paralysis and respiratory distress, followed by death within 2-4 hours (By similarity).</text>
</comment>
<comment type="subunit">
    <text evidence="2">Monomer in solution, homodimer in crystal state.</text>
</comment>
<comment type="subcellular location">
    <subcellularLocation>
        <location evidence="1">Secreted</location>
    </subcellularLocation>
</comment>
<comment type="tissue specificity">
    <text evidence="4">Expressed by the venom gland.</text>
</comment>
<comment type="similarity">
    <text evidence="4">Belongs to the three-finger toxin family. Long-chain subfamily. Type II alpha-neurotoxin sub-subfamily.</text>
</comment>
<name>3L23_BUNCA</name>
<protein>
    <recommendedName>
        <fullName evidence="4">Alpha-elapitoxin-Bc2c</fullName>
        <shortName evidence="4">Alpha-EPTX-Bc2c</shortName>
    </recommendedName>
    <alternativeName>
        <fullName evidence="6">Alpha-delta-Bgt-3</fullName>
    </alternativeName>
    <alternativeName>
        <fullName evidence="3">Alpha/delta-bungarotoxin-3</fullName>
        <shortName evidence="3">Alpha/delta-BgTx-3</shortName>
    </alternativeName>
</protein>
<evidence type="ECO:0000250" key="1">
    <source>
        <dbReference type="UniProtKB" id="A1IVR8"/>
    </source>
</evidence>
<evidence type="ECO:0000250" key="2">
    <source>
        <dbReference type="UniProtKB" id="P60615"/>
    </source>
</evidence>
<evidence type="ECO:0000303" key="3">
    <source>
    </source>
</evidence>
<evidence type="ECO:0000305" key="4"/>
<evidence type="ECO:0000305" key="5">
    <source>
    </source>
</evidence>
<evidence type="ECO:0000312" key="6">
    <source>
        <dbReference type="EMBL" id="CAJ77818.1"/>
    </source>
</evidence>
<sequence>YTLLCYKTPSPINAETCPPGENLCYTKMWCDAWCSSRGKVVELGCAATCPSKKPYEEVTCCSTDKCNPHPKQRPD</sequence>
<feature type="signal peptide" evidence="1">
    <location>
        <begin position="1" status="less than"/>
        <end position="2"/>
    </location>
</feature>
<feature type="chain" id="PRO_5000189419" description="Alpha-elapitoxin-Bc2c" evidence="5">
    <location>
        <begin position="3"/>
        <end position="75"/>
    </location>
</feature>
<feature type="disulfide bond" evidence="2">
    <location>
        <begin position="5"/>
        <end position="24"/>
    </location>
</feature>
<feature type="disulfide bond" evidence="2">
    <location>
        <begin position="17"/>
        <end position="45"/>
    </location>
</feature>
<feature type="disulfide bond" evidence="2">
    <location>
        <begin position="30"/>
        <end position="34"/>
    </location>
</feature>
<feature type="disulfide bond" evidence="2">
    <location>
        <begin position="49"/>
        <end position="60"/>
    </location>
</feature>
<feature type="disulfide bond" evidence="2">
    <location>
        <begin position="61"/>
        <end position="66"/>
    </location>
</feature>
<feature type="non-terminal residue" evidence="6">
    <location>
        <position position="1"/>
    </location>
</feature>
<proteinExistence type="inferred from homology"/>
<keyword id="KW-0008">Acetylcholine receptor inhibiting toxin</keyword>
<keyword id="KW-1015">Disulfide bond</keyword>
<keyword id="KW-0872">Ion channel impairing toxin</keyword>
<keyword id="KW-0528">Neurotoxin</keyword>
<keyword id="KW-0629">Postsynaptic neurotoxin</keyword>
<keyword id="KW-0964">Secreted</keyword>
<keyword id="KW-0732">Signal</keyword>
<keyword id="KW-0800">Toxin</keyword>
<accession>A1IVR7</accession>
<reference key="1">
    <citation type="journal article" date="2019" name="Biochem. J.">
        <title>Novel long-chain neurotoxins from Bungarus candidus distinguish the two binding sites in muscle-type nicotinic acetylcholine receptors.</title>
        <authorList>
            <person name="Utkin Y.N."/>
            <person name="Kuch U."/>
            <person name="Kasheverov I.E."/>
            <person name="Lebedev D.S."/>
            <person name="Cederlund E."/>
            <person name="Molles B.E."/>
            <person name="Polyak I."/>
            <person name="Ivanov I.A."/>
            <person name="Prokopev N.A."/>
            <person name="Ziganshin R.H."/>
            <person name="Jornvall H."/>
            <person name="Alvelius G."/>
            <person name="Chanhome L."/>
            <person name="Warrell D.A."/>
            <person name="Mebs D."/>
            <person name="Bergman T."/>
            <person name="Tsetlin V.I."/>
        </authorList>
    </citation>
    <scope>NUCLEOTIDE SEQUENCE [GENOMIC DNA]</scope>
    <source>
        <tissue>Venom</tissue>
    </source>
</reference>
<organism>
    <name type="scientific">Bungarus candidus</name>
    <name type="common">Malayan krait</name>
    <dbReference type="NCBI Taxonomy" id="92438"/>
    <lineage>
        <taxon>Eukaryota</taxon>
        <taxon>Metazoa</taxon>
        <taxon>Chordata</taxon>
        <taxon>Craniata</taxon>
        <taxon>Vertebrata</taxon>
        <taxon>Euteleostomi</taxon>
        <taxon>Lepidosauria</taxon>
        <taxon>Squamata</taxon>
        <taxon>Bifurcata</taxon>
        <taxon>Unidentata</taxon>
        <taxon>Episquamata</taxon>
        <taxon>Toxicofera</taxon>
        <taxon>Serpentes</taxon>
        <taxon>Colubroidea</taxon>
        <taxon>Elapidae</taxon>
        <taxon>Bungarinae</taxon>
        <taxon>Bungarus</taxon>
    </lineage>
</organism>